<proteinExistence type="inferred from homology"/>
<protein>
    <recommendedName>
        <fullName evidence="3">Large ribosomal subunit protein eL39</fullName>
    </recommendedName>
    <alternativeName>
        <fullName>50S ribosomal protein L39e</fullName>
    </alternativeName>
</protein>
<feature type="initiator methionine" description="Removed" evidence="1">
    <location>
        <position position="1"/>
    </location>
</feature>
<feature type="chain" id="PRO_0000127048" description="Large ribosomal subunit protein eL39">
    <location>
        <begin position="2"/>
        <end position="50"/>
    </location>
</feature>
<feature type="region of interest" description="Disordered" evidence="2">
    <location>
        <begin position="1"/>
        <end position="20"/>
    </location>
</feature>
<feature type="region of interest" description="Disordered" evidence="2">
    <location>
        <begin position="30"/>
        <end position="50"/>
    </location>
</feature>
<feature type="compositionally biased region" description="Basic residues" evidence="2">
    <location>
        <begin position="1"/>
        <end position="12"/>
    </location>
</feature>
<dbReference type="EMBL" id="AE004437">
    <property type="protein sequence ID" value="AAG20542.1"/>
    <property type="molecule type" value="Genomic_DNA"/>
</dbReference>
<dbReference type="PIR" id="B84397">
    <property type="entry name" value="B84397"/>
</dbReference>
<dbReference type="RefSeq" id="WP_010903844.1">
    <property type="nucleotide sequence ID" value="NC_002607.1"/>
</dbReference>
<dbReference type="SMR" id="Q9HMM9"/>
<dbReference type="FunCoup" id="Q9HMM9">
    <property type="interactions" value="80"/>
</dbReference>
<dbReference type="STRING" id="64091.VNG_2469G"/>
<dbReference type="PaxDb" id="64091-VNG_2469G"/>
<dbReference type="KEGG" id="hal:VNG_2469G"/>
<dbReference type="PATRIC" id="fig|64091.14.peg.1910"/>
<dbReference type="HOGENOM" id="CLU_181948_4_0_2"/>
<dbReference type="InParanoid" id="Q9HMM9"/>
<dbReference type="OrthoDB" id="65887at2157"/>
<dbReference type="PhylomeDB" id="Q9HMM9"/>
<dbReference type="Proteomes" id="UP000000554">
    <property type="component" value="Chromosome"/>
</dbReference>
<dbReference type="GO" id="GO:0022625">
    <property type="term" value="C:cytosolic large ribosomal subunit"/>
    <property type="evidence" value="ECO:0000318"/>
    <property type="project" value="GO_Central"/>
</dbReference>
<dbReference type="GO" id="GO:0003735">
    <property type="term" value="F:structural constituent of ribosome"/>
    <property type="evidence" value="ECO:0007669"/>
    <property type="project" value="InterPro"/>
</dbReference>
<dbReference type="GO" id="GO:0006412">
    <property type="term" value="P:translation"/>
    <property type="evidence" value="ECO:0007669"/>
    <property type="project" value="UniProtKB-UniRule"/>
</dbReference>
<dbReference type="FunFam" id="1.10.1620.10:FF:000001">
    <property type="entry name" value="60S ribosomal protein-like L39"/>
    <property type="match status" value="1"/>
</dbReference>
<dbReference type="Gene3D" id="1.10.1620.10">
    <property type="entry name" value="Ribosomal protein L39e"/>
    <property type="match status" value="1"/>
</dbReference>
<dbReference type="HAMAP" id="MF_00629">
    <property type="entry name" value="Ribosomal_eL39"/>
    <property type="match status" value="1"/>
</dbReference>
<dbReference type="InterPro" id="IPR000077">
    <property type="entry name" value="Ribosomal_eL39"/>
</dbReference>
<dbReference type="InterPro" id="IPR020083">
    <property type="entry name" value="Ribosomal_eL39_CS"/>
</dbReference>
<dbReference type="InterPro" id="IPR023626">
    <property type="entry name" value="Ribosomal_eL39_dom_sf"/>
</dbReference>
<dbReference type="NCBIfam" id="NF002316">
    <property type="entry name" value="PRK01242.1"/>
    <property type="match status" value="1"/>
</dbReference>
<dbReference type="Pfam" id="PF00832">
    <property type="entry name" value="Ribosomal_L39"/>
    <property type="match status" value="1"/>
</dbReference>
<dbReference type="SUPFAM" id="SSF48662">
    <property type="entry name" value="Ribosomal protein L39e"/>
    <property type="match status" value="1"/>
</dbReference>
<dbReference type="PROSITE" id="PS00051">
    <property type="entry name" value="RIBOSOMAL_L39E"/>
    <property type="match status" value="1"/>
</dbReference>
<sequence>MGKKSKASKKRLAKLERQNSRVPAWVMMKTNRDVQRNPKRRNWRRNDTDE</sequence>
<name>RL39_HALSA</name>
<evidence type="ECO:0000250" key="1"/>
<evidence type="ECO:0000256" key="2">
    <source>
        <dbReference type="SAM" id="MobiDB-lite"/>
    </source>
</evidence>
<evidence type="ECO:0000305" key="3"/>
<keyword id="KW-1185">Reference proteome</keyword>
<keyword id="KW-0687">Ribonucleoprotein</keyword>
<keyword id="KW-0689">Ribosomal protein</keyword>
<reference key="1">
    <citation type="journal article" date="2000" name="Proc. Natl. Acad. Sci. U.S.A.">
        <title>Genome sequence of Halobacterium species NRC-1.</title>
        <authorList>
            <person name="Ng W.V."/>
            <person name="Kennedy S.P."/>
            <person name="Mahairas G.G."/>
            <person name="Berquist B."/>
            <person name="Pan M."/>
            <person name="Shukla H.D."/>
            <person name="Lasky S.R."/>
            <person name="Baliga N.S."/>
            <person name="Thorsson V."/>
            <person name="Sbrogna J."/>
            <person name="Swartzell S."/>
            <person name="Weir D."/>
            <person name="Hall J."/>
            <person name="Dahl T.A."/>
            <person name="Welti R."/>
            <person name="Goo Y.A."/>
            <person name="Leithauser B."/>
            <person name="Keller K."/>
            <person name="Cruz R."/>
            <person name="Danson M.J."/>
            <person name="Hough D.W."/>
            <person name="Maddocks D.G."/>
            <person name="Jablonski P.E."/>
            <person name="Krebs M.P."/>
            <person name="Angevine C.M."/>
            <person name="Dale H."/>
            <person name="Isenbarger T.A."/>
            <person name="Peck R.F."/>
            <person name="Pohlschroder M."/>
            <person name="Spudich J.L."/>
            <person name="Jung K.-H."/>
            <person name="Alam M."/>
            <person name="Freitas T."/>
            <person name="Hou S."/>
            <person name="Daniels C.J."/>
            <person name="Dennis P.P."/>
            <person name="Omer A.D."/>
            <person name="Ebhardt H."/>
            <person name="Lowe T.M."/>
            <person name="Liang P."/>
            <person name="Riley M."/>
            <person name="Hood L."/>
            <person name="DasSarma S."/>
        </authorList>
    </citation>
    <scope>NUCLEOTIDE SEQUENCE [LARGE SCALE GENOMIC DNA]</scope>
    <source>
        <strain>ATCC 700922 / JCM 11081 / NRC-1</strain>
    </source>
</reference>
<comment type="similarity">
    <text evidence="3">Belongs to the eukaryotic ribosomal protein eL39 family.</text>
</comment>
<gene>
    <name type="primary">rpl39e</name>
    <name type="ordered locus">VNG_2469G</name>
</gene>
<organism>
    <name type="scientific">Halobacterium salinarum (strain ATCC 700922 / JCM 11081 / NRC-1)</name>
    <name type="common">Halobacterium halobium</name>
    <dbReference type="NCBI Taxonomy" id="64091"/>
    <lineage>
        <taxon>Archaea</taxon>
        <taxon>Methanobacteriati</taxon>
        <taxon>Methanobacteriota</taxon>
        <taxon>Stenosarchaea group</taxon>
        <taxon>Halobacteria</taxon>
        <taxon>Halobacteriales</taxon>
        <taxon>Halobacteriaceae</taxon>
        <taxon>Halobacterium</taxon>
        <taxon>Halobacterium salinarum NRC-34001</taxon>
    </lineage>
</organism>
<accession>Q9HMM9</accession>